<comment type="function">
    <text evidence="1">Required for maturation of 30S ribosomal subunits.</text>
</comment>
<comment type="subcellular location">
    <subcellularLocation>
        <location evidence="1">Cytoplasm</location>
    </subcellularLocation>
</comment>
<comment type="similarity">
    <text evidence="1">Belongs to the RimP family.</text>
</comment>
<feature type="chain" id="PRO_0000384756" description="Ribosome maturation factor RimP">
    <location>
        <begin position="1"/>
        <end position="220"/>
    </location>
</feature>
<feature type="region of interest" description="Disordered" evidence="2">
    <location>
        <begin position="1"/>
        <end position="35"/>
    </location>
</feature>
<feature type="region of interest" description="Disordered" evidence="2">
    <location>
        <begin position="184"/>
        <end position="220"/>
    </location>
</feature>
<feature type="compositionally biased region" description="Low complexity" evidence="2">
    <location>
        <begin position="1"/>
        <end position="15"/>
    </location>
</feature>
<feature type="compositionally biased region" description="Acidic residues" evidence="2">
    <location>
        <begin position="198"/>
        <end position="220"/>
    </location>
</feature>
<dbReference type="EMBL" id="CP000667">
    <property type="protein sequence ID" value="ABP53834.1"/>
    <property type="molecule type" value="Genomic_DNA"/>
</dbReference>
<dbReference type="RefSeq" id="WP_011905266.1">
    <property type="nucleotide sequence ID" value="NC_009380.1"/>
</dbReference>
<dbReference type="SMR" id="A4X4N4"/>
<dbReference type="STRING" id="369723.Strop_1367"/>
<dbReference type="KEGG" id="stp:Strop_1367"/>
<dbReference type="PATRIC" id="fig|369723.5.peg.1393"/>
<dbReference type="eggNOG" id="COG0779">
    <property type="taxonomic scope" value="Bacteria"/>
</dbReference>
<dbReference type="HOGENOM" id="CLU_070525_3_0_11"/>
<dbReference type="Proteomes" id="UP000000235">
    <property type="component" value="Chromosome"/>
</dbReference>
<dbReference type="GO" id="GO:0005829">
    <property type="term" value="C:cytosol"/>
    <property type="evidence" value="ECO:0007669"/>
    <property type="project" value="TreeGrafter"/>
</dbReference>
<dbReference type="GO" id="GO:0000028">
    <property type="term" value="P:ribosomal small subunit assembly"/>
    <property type="evidence" value="ECO:0007669"/>
    <property type="project" value="TreeGrafter"/>
</dbReference>
<dbReference type="GO" id="GO:0006412">
    <property type="term" value="P:translation"/>
    <property type="evidence" value="ECO:0007669"/>
    <property type="project" value="TreeGrafter"/>
</dbReference>
<dbReference type="CDD" id="cd01734">
    <property type="entry name" value="YlxS_C"/>
    <property type="match status" value="1"/>
</dbReference>
<dbReference type="Gene3D" id="3.30.300.70">
    <property type="entry name" value="RimP-like superfamily, N-terminal"/>
    <property type="match status" value="1"/>
</dbReference>
<dbReference type="HAMAP" id="MF_01077">
    <property type="entry name" value="RimP"/>
    <property type="match status" value="1"/>
</dbReference>
<dbReference type="InterPro" id="IPR003728">
    <property type="entry name" value="Ribosome_maturation_RimP"/>
</dbReference>
<dbReference type="InterPro" id="IPR028998">
    <property type="entry name" value="RimP_C"/>
</dbReference>
<dbReference type="InterPro" id="IPR036847">
    <property type="entry name" value="RimP_C_sf"/>
</dbReference>
<dbReference type="InterPro" id="IPR028989">
    <property type="entry name" value="RimP_N"/>
</dbReference>
<dbReference type="InterPro" id="IPR035956">
    <property type="entry name" value="RimP_N_sf"/>
</dbReference>
<dbReference type="NCBIfam" id="NF000930">
    <property type="entry name" value="PRK00092.2-2"/>
    <property type="match status" value="1"/>
</dbReference>
<dbReference type="PANTHER" id="PTHR33867">
    <property type="entry name" value="RIBOSOME MATURATION FACTOR RIMP"/>
    <property type="match status" value="1"/>
</dbReference>
<dbReference type="PANTHER" id="PTHR33867:SF1">
    <property type="entry name" value="RIBOSOME MATURATION FACTOR RIMP"/>
    <property type="match status" value="1"/>
</dbReference>
<dbReference type="Pfam" id="PF17384">
    <property type="entry name" value="DUF150_C"/>
    <property type="match status" value="1"/>
</dbReference>
<dbReference type="Pfam" id="PF02576">
    <property type="entry name" value="RimP_N"/>
    <property type="match status" value="1"/>
</dbReference>
<dbReference type="SUPFAM" id="SSF74942">
    <property type="entry name" value="YhbC-like, C-terminal domain"/>
    <property type="match status" value="1"/>
</dbReference>
<dbReference type="SUPFAM" id="SSF75420">
    <property type="entry name" value="YhbC-like, N-terminal domain"/>
    <property type="match status" value="1"/>
</dbReference>
<proteinExistence type="inferred from homology"/>
<reference key="1">
    <citation type="journal article" date="2007" name="Proc. Natl. Acad. Sci. U.S.A.">
        <title>Genome sequencing reveals complex secondary metabolome in the marine actinomycete Salinispora tropica.</title>
        <authorList>
            <person name="Udwary D.W."/>
            <person name="Zeigler L."/>
            <person name="Asolkar R.N."/>
            <person name="Singan V."/>
            <person name="Lapidus A."/>
            <person name="Fenical W."/>
            <person name="Jensen P.R."/>
            <person name="Moore B.S."/>
        </authorList>
    </citation>
    <scope>NUCLEOTIDE SEQUENCE [LARGE SCALE GENOMIC DNA]</scope>
    <source>
        <strain>ATCC BAA-916 / DSM 44818 / JCM 13857 / NBRC 105044 / CNB-440</strain>
    </source>
</reference>
<name>RIMP_SALTO</name>
<organism>
    <name type="scientific">Salinispora tropica (strain ATCC BAA-916 / DSM 44818 / JCM 13857 / NBRC 105044 / CNB-440)</name>
    <dbReference type="NCBI Taxonomy" id="369723"/>
    <lineage>
        <taxon>Bacteria</taxon>
        <taxon>Bacillati</taxon>
        <taxon>Actinomycetota</taxon>
        <taxon>Actinomycetes</taxon>
        <taxon>Micromonosporales</taxon>
        <taxon>Micromonosporaceae</taxon>
        <taxon>Salinispora</taxon>
    </lineage>
</organism>
<accession>A4X4N4</accession>
<protein>
    <recommendedName>
        <fullName evidence="1">Ribosome maturation factor RimP</fullName>
    </recommendedName>
</protein>
<gene>
    <name evidence="1" type="primary">rimP</name>
    <name type="ordered locus">Strop_1367</name>
</gene>
<evidence type="ECO:0000255" key="1">
    <source>
        <dbReference type="HAMAP-Rule" id="MF_01077"/>
    </source>
</evidence>
<evidence type="ECO:0000256" key="2">
    <source>
        <dbReference type="SAM" id="MobiDB-lite"/>
    </source>
</evidence>
<keyword id="KW-0963">Cytoplasm</keyword>
<keyword id="KW-1185">Reference proteome</keyword>
<keyword id="KW-0690">Ribosome biogenesis</keyword>
<sequence>MSQRGRATRPTGPTGRPRRTGGQRSAGRVSRGGDLASRRARLHEVVEPVVGEAGYDLEELSISRAGRRHVVQVIVDADGGIDLDAVADVSRAVSAALDAAEEARGDIVAGEYQLEVSSPGVSRPLTLPRHWRRNAGRLVRVTVRGGPDAGDRQLTGRVVEADDEQVVLETDAGRAGWSYAELGPGRVQVEFTRPGETDGADGADEAGDFDDDDDVEGEER</sequence>